<proteinExistence type="inferred from homology"/>
<keyword id="KW-0687">Ribonucleoprotein</keyword>
<keyword id="KW-0689">Ribosomal protein</keyword>
<keyword id="KW-0694">RNA-binding</keyword>
<keyword id="KW-0699">rRNA-binding</keyword>
<comment type="function">
    <text evidence="1">One of the early assembly proteins it binds 23S rRNA. One of the proteins that surrounds the polypeptide exit tunnel on the outside of the ribosome. Forms the main docking site for trigger factor binding to the ribosome.</text>
</comment>
<comment type="subunit">
    <text evidence="1">Part of the 50S ribosomal subunit. Contacts protein L29, and trigger factor when it is bound to the ribosome.</text>
</comment>
<comment type="similarity">
    <text evidence="1">Belongs to the universal ribosomal protein uL23 family.</text>
</comment>
<feature type="chain" id="PRO_1000184064" description="Large ribosomal subunit protein uL23">
    <location>
        <begin position="1"/>
        <end position="96"/>
    </location>
</feature>
<protein>
    <recommendedName>
        <fullName evidence="1">Large ribosomal subunit protein uL23</fullName>
    </recommendedName>
    <alternativeName>
        <fullName evidence="2">50S ribosomal protein L23</fullName>
    </alternativeName>
</protein>
<reference key="1">
    <citation type="submission" date="2009-02" db="EMBL/GenBank/DDBJ databases">
        <title>Genome sequence of Bacillus cereus 03BB102.</title>
        <authorList>
            <person name="Dodson R.J."/>
            <person name="Jackson P."/>
            <person name="Munk A.C."/>
            <person name="Brettin T."/>
            <person name="Bruce D."/>
            <person name="Detter C."/>
            <person name="Tapia R."/>
            <person name="Han C."/>
            <person name="Sutton G."/>
            <person name="Sims D."/>
        </authorList>
    </citation>
    <scope>NUCLEOTIDE SEQUENCE [LARGE SCALE GENOMIC DNA]</scope>
    <source>
        <strain>03BB102</strain>
    </source>
</reference>
<name>RL23_BACC3</name>
<gene>
    <name evidence="1" type="primary">rplW</name>
    <name type="ordered locus">BCA_0141</name>
</gene>
<dbReference type="EMBL" id="CP001407">
    <property type="protein sequence ID" value="ACO27150.1"/>
    <property type="molecule type" value="Genomic_DNA"/>
</dbReference>
<dbReference type="RefSeq" id="WP_001205558.1">
    <property type="nucleotide sequence ID" value="NZ_CP009318.1"/>
</dbReference>
<dbReference type="SMR" id="C1ET41"/>
<dbReference type="GeneID" id="93010941"/>
<dbReference type="KEGG" id="bcx:BCA_0141"/>
<dbReference type="PATRIC" id="fig|572264.18.peg.176"/>
<dbReference type="Proteomes" id="UP000002210">
    <property type="component" value="Chromosome"/>
</dbReference>
<dbReference type="GO" id="GO:1990904">
    <property type="term" value="C:ribonucleoprotein complex"/>
    <property type="evidence" value="ECO:0007669"/>
    <property type="project" value="UniProtKB-KW"/>
</dbReference>
<dbReference type="GO" id="GO:0005840">
    <property type="term" value="C:ribosome"/>
    <property type="evidence" value="ECO:0007669"/>
    <property type="project" value="UniProtKB-KW"/>
</dbReference>
<dbReference type="GO" id="GO:0019843">
    <property type="term" value="F:rRNA binding"/>
    <property type="evidence" value="ECO:0007669"/>
    <property type="project" value="UniProtKB-UniRule"/>
</dbReference>
<dbReference type="GO" id="GO:0003735">
    <property type="term" value="F:structural constituent of ribosome"/>
    <property type="evidence" value="ECO:0007669"/>
    <property type="project" value="InterPro"/>
</dbReference>
<dbReference type="GO" id="GO:0006412">
    <property type="term" value="P:translation"/>
    <property type="evidence" value="ECO:0007669"/>
    <property type="project" value="UniProtKB-UniRule"/>
</dbReference>
<dbReference type="FunFam" id="3.30.70.330:FF:000001">
    <property type="entry name" value="50S ribosomal protein L23"/>
    <property type="match status" value="1"/>
</dbReference>
<dbReference type="Gene3D" id="3.30.70.330">
    <property type="match status" value="1"/>
</dbReference>
<dbReference type="HAMAP" id="MF_01369_B">
    <property type="entry name" value="Ribosomal_uL23_B"/>
    <property type="match status" value="1"/>
</dbReference>
<dbReference type="InterPro" id="IPR012677">
    <property type="entry name" value="Nucleotide-bd_a/b_plait_sf"/>
</dbReference>
<dbReference type="InterPro" id="IPR013025">
    <property type="entry name" value="Ribosomal_uL23-like"/>
</dbReference>
<dbReference type="InterPro" id="IPR012678">
    <property type="entry name" value="Ribosomal_uL23/eL15/eS24_sf"/>
</dbReference>
<dbReference type="InterPro" id="IPR001014">
    <property type="entry name" value="Ribosomal_uL23_CS"/>
</dbReference>
<dbReference type="NCBIfam" id="NF004363">
    <property type="entry name" value="PRK05738.2-4"/>
    <property type="match status" value="1"/>
</dbReference>
<dbReference type="PANTHER" id="PTHR11620">
    <property type="entry name" value="60S RIBOSOMAL PROTEIN L23A"/>
    <property type="match status" value="1"/>
</dbReference>
<dbReference type="Pfam" id="PF00276">
    <property type="entry name" value="Ribosomal_L23"/>
    <property type="match status" value="1"/>
</dbReference>
<dbReference type="SUPFAM" id="SSF54189">
    <property type="entry name" value="Ribosomal proteins S24e, L23 and L15e"/>
    <property type="match status" value="1"/>
</dbReference>
<dbReference type="PROSITE" id="PS00050">
    <property type="entry name" value="RIBOSOMAL_L23"/>
    <property type="match status" value="1"/>
</dbReference>
<sequence length="96" mass="11114">MRDPRDIIKRPVITERSMEMMAEKKYTFDVDVKSNKTEVKDALEAIFGVKVEKVNIMNYKPKAKRVGRHAGFTSRRRKAIVKLTADSKEIEIFQGV</sequence>
<accession>C1ET41</accession>
<organism>
    <name type="scientific">Bacillus cereus (strain 03BB102)</name>
    <dbReference type="NCBI Taxonomy" id="572264"/>
    <lineage>
        <taxon>Bacteria</taxon>
        <taxon>Bacillati</taxon>
        <taxon>Bacillota</taxon>
        <taxon>Bacilli</taxon>
        <taxon>Bacillales</taxon>
        <taxon>Bacillaceae</taxon>
        <taxon>Bacillus</taxon>
        <taxon>Bacillus cereus group</taxon>
    </lineage>
</organism>
<evidence type="ECO:0000255" key="1">
    <source>
        <dbReference type="HAMAP-Rule" id="MF_01369"/>
    </source>
</evidence>
<evidence type="ECO:0000305" key="2"/>